<evidence type="ECO:0000255" key="1">
    <source>
        <dbReference type="HAMAP-Rule" id="MF_00036"/>
    </source>
</evidence>
<accession>Q1RKG2</accession>
<organism>
    <name type="scientific">Rickettsia bellii (strain RML369-C)</name>
    <dbReference type="NCBI Taxonomy" id="336407"/>
    <lineage>
        <taxon>Bacteria</taxon>
        <taxon>Pseudomonadati</taxon>
        <taxon>Pseudomonadota</taxon>
        <taxon>Alphaproteobacteria</taxon>
        <taxon>Rickettsiales</taxon>
        <taxon>Rickettsiaceae</taxon>
        <taxon>Rickettsieae</taxon>
        <taxon>Rickettsia</taxon>
        <taxon>belli group</taxon>
    </lineage>
</organism>
<proteinExistence type="inferred from homology"/>
<name>SYA_RICBR</name>
<comment type="function">
    <text evidence="1">Catalyzes the attachment of alanine to tRNA(Ala) in a two-step reaction: alanine is first activated by ATP to form Ala-AMP and then transferred to the acceptor end of tRNA(Ala). Also edits incorrectly charged Ser-tRNA(Ala) and Gly-tRNA(Ala) via its editing domain.</text>
</comment>
<comment type="catalytic activity">
    <reaction evidence="1">
        <text>tRNA(Ala) + L-alanine + ATP = L-alanyl-tRNA(Ala) + AMP + diphosphate</text>
        <dbReference type="Rhea" id="RHEA:12540"/>
        <dbReference type="Rhea" id="RHEA-COMP:9657"/>
        <dbReference type="Rhea" id="RHEA-COMP:9923"/>
        <dbReference type="ChEBI" id="CHEBI:30616"/>
        <dbReference type="ChEBI" id="CHEBI:33019"/>
        <dbReference type="ChEBI" id="CHEBI:57972"/>
        <dbReference type="ChEBI" id="CHEBI:78442"/>
        <dbReference type="ChEBI" id="CHEBI:78497"/>
        <dbReference type="ChEBI" id="CHEBI:456215"/>
        <dbReference type="EC" id="6.1.1.7"/>
    </reaction>
</comment>
<comment type="cofactor">
    <cofactor evidence="1">
        <name>Zn(2+)</name>
        <dbReference type="ChEBI" id="CHEBI:29105"/>
    </cofactor>
    <text evidence="1">Binds 1 zinc ion per subunit.</text>
</comment>
<comment type="subcellular location">
    <subcellularLocation>
        <location evidence="1">Cytoplasm</location>
    </subcellularLocation>
</comment>
<comment type="domain">
    <text evidence="1">Consists of three domains; the N-terminal catalytic domain, the editing domain and the C-terminal C-Ala domain. The editing domain removes incorrectly charged amino acids, while the C-Ala domain, along with tRNA(Ala), serves as a bridge to cooperatively bring together the editing and aminoacylation centers thus stimulating deacylation of misacylated tRNAs.</text>
</comment>
<comment type="similarity">
    <text evidence="1">Belongs to the class-II aminoacyl-tRNA synthetase family.</text>
</comment>
<protein>
    <recommendedName>
        <fullName evidence="1">Alanine--tRNA ligase</fullName>
        <ecNumber evidence="1">6.1.1.7</ecNumber>
    </recommendedName>
    <alternativeName>
        <fullName evidence="1">Alanyl-tRNA synthetase</fullName>
        <shortName evidence="1">AlaRS</shortName>
    </alternativeName>
</protein>
<feature type="chain" id="PRO_0000278068" description="Alanine--tRNA ligase">
    <location>
        <begin position="1"/>
        <end position="877"/>
    </location>
</feature>
<feature type="binding site" evidence="1">
    <location>
        <position position="567"/>
    </location>
    <ligand>
        <name>Zn(2+)</name>
        <dbReference type="ChEBI" id="CHEBI:29105"/>
    </ligand>
</feature>
<feature type="binding site" evidence="1">
    <location>
        <position position="571"/>
    </location>
    <ligand>
        <name>Zn(2+)</name>
        <dbReference type="ChEBI" id="CHEBI:29105"/>
    </ligand>
</feature>
<feature type="binding site" evidence="1">
    <location>
        <position position="669"/>
    </location>
    <ligand>
        <name>Zn(2+)</name>
        <dbReference type="ChEBI" id="CHEBI:29105"/>
    </ligand>
</feature>
<feature type="binding site" evidence="1">
    <location>
        <position position="673"/>
    </location>
    <ligand>
        <name>Zn(2+)</name>
        <dbReference type="ChEBI" id="CHEBI:29105"/>
    </ligand>
</feature>
<gene>
    <name evidence="1" type="primary">alaS</name>
    <name type="ordered locus">RBE_0071</name>
</gene>
<sequence length="877" mass="98911">MSKFTTEEIRSKFISYFKANNHTHVSSSPLIPHNDPSLMFVNSGMVQFKNVFTGQEKRPYDKAVTSQKSLRAGGKHNDLENVGYTARHHTFFEMLGNFSFGDYFKEQAIYYAWNLLTKEFELPKDKLYATVYHTDDEAASYWKKIAGFSDDRIIRIKTNDNFWSMGDLGPCGPCSEIFYDHGEQIYGGLPGTKDEDGDRFIEIWNMVFMQYEQINKDTRIDLPKKSIDTGMGLERMTAVLQHVNNNYDIDLFQEIISFTENILKVKVEAEAKFSYRVIADHLRACSFLIADGVVPSSEGRGYVLRRIMRRAMRHAHILGSKEPLMYKLLPKLVDLMGNTYPELKRAESFISSILEQEEIRFKTTLERGLKLLSEETENLNAGGRLSGEVAFKLYDTYGFPLDLTEDILKNRNIAVDHQGFEQQMLEQKECARKSWLGSGESKTDQLWFDIKAKYGSTEFLGYNLNEADGKIVALIKDNALVNDISEIDTQFLLIANQTPFYGESGGQMGDIGVIKTQNCEIEVIDTLKYLGFIIVHKCVLKKGKVITDENANFSIDVKYRQNLRIHHSATHLLHAVLHQILGKHVTQKGSLVATSYLRFDISHPKALTPEEIVLIEDKVNEIIRDNHEVDTTLMSTEDAVKQGAMALFGEKYDSEVRVVKMGETSLELCGGTHVRHTGDIGCFKITSESAIAAGIRRIEAVCGEFVIKLIREKEGLLKNIENSLKTNKNELVSKVNNILERNKELEKELEKTYLASLDLSVEQIEKQAEKIKEIKLIYCHVENLDNKILRQAAENLTKKVEDLVVVYVGNNSSKLSITVGISRAITDKFNAGFIAKELSLFLGGSGGGGQPSIAQAGGSDLAKLPKVKDQLQSLLDA</sequence>
<reference key="1">
    <citation type="journal article" date="2006" name="PLoS Genet.">
        <title>Genome sequence of Rickettsia bellii illuminates the role of amoebae in gene exchanges between intracellular pathogens.</title>
        <authorList>
            <person name="Ogata H."/>
            <person name="La Scola B."/>
            <person name="Audic S."/>
            <person name="Renesto P."/>
            <person name="Blanc G."/>
            <person name="Robert C."/>
            <person name="Fournier P.-E."/>
            <person name="Claverie J.-M."/>
            <person name="Raoult D."/>
        </authorList>
    </citation>
    <scope>NUCLEOTIDE SEQUENCE [LARGE SCALE GENOMIC DNA]</scope>
    <source>
        <strain>RML369-C</strain>
    </source>
</reference>
<dbReference type="EC" id="6.1.1.7" evidence="1"/>
<dbReference type="EMBL" id="CP000087">
    <property type="protein sequence ID" value="ABE04152.1"/>
    <property type="molecule type" value="Genomic_DNA"/>
</dbReference>
<dbReference type="RefSeq" id="WP_011476767.1">
    <property type="nucleotide sequence ID" value="NC_007940.1"/>
</dbReference>
<dbReference type="SMR" id="Q1RKG2"/>
<dbReference type="KEGG" id="rbe:RBE_0071"/>
<dbReference type="eggNOG" id="COG0013">
    <property type="taxonomic scope" value="Bacteria"/>
</dbReference>
<dbReference type="HOGENOM" id="CLU_004485_1_1_5"/>
<dbReference type="OrthoDB" id="9803884at2"/>
<dbReference type="Proteomes" id="UP000001951">
    <property type="component" value="Chromosome"/>
</dbReference>
<dbReference type="GO" id="GO:0005829">
    <property type="term" value="C:cytosol"/>
    <property type="evidence" value="ECO:0007669"/>
    <property type="project" value="TreeGrafter"/>
</dbReference>
<dbReference type="GO" id="GO:0004813">
    <property type="term" value="F:alanine-tRNA ligase activity"/>
    <property type="evidence" value="ECO:0007669"/>
    <property type="project" value="UniProtKB-UniRule"/>
</dbReference>
<dbReference type="GO" id="GO:0002161">
    <property type="term" value="F:aminoacyl-tRNA deacylase activity"/>
    <property type="evidence" value="ECO:0007669"/>
    <property type="project" value="TreeGrafter"/>
</dbReference>
<dbReference type="GO" id="GO:0005524">
    <property type="term" value="F:ATP binding"/>
    <property type="evidence" value="ECO:0007669"/>
    <property type="project" value="UniProtKB-UniRule"/>
</dbReference>
<dbReference type="GO" id="GO:0000049">
    <property type="term" value="F:tRNA binding"/>
    <property type="evidence" value="ECO:0007669"/>
    <property type="project" value="UniProtKB-KW"/>
</dbReference>
<dbReference type="GO" id="GO:0008270">
    <property type="term" value="F:zinc ion binding"/>
    <property type="evidence" value="ECO:0007669"/>
    <property type="project" value="UniProtKB-UniRule"/>
</dbReference>
<dbReference type="GO" id="GO:0006419">
    <property type="term" value="P:alanyl-tRNA aminoacylation"/>
    <property type="evidence" value="ECO:0007669"/>
    <property type="project" value="UniProtKB-UniRule"/>
</dbReference>
<dbReference type="GO" id="GO:0045892">
    <property type="term" value="P:negative regulation of DNA-templated transcription"/>
    <property type="evidence" value="ECO:0007669"/>
    <property type="project" value="TreeGrafter"/>
</dbReference>
<dbReference type="CDD" id="cd00673">
    <property type="entry name" value="AlaRS_core"/>
    <property type="match status" value="1"/>
</dbReference>
<dbReference type="FunFam" id="3.10.310.40:FF:000001">
    <property type="entry name" value="Alanine--tRNA ligase"/>
    <property type="match status" value="1"/>
</dbReference>
<dbReference type="FunFam" id="3.30.54.20:FF:000001">
    <property type="entry name" value="Alanine--tRNA ligase"/>
    <property type="match status" value="1"/>
</dbReference>
<dbReference type="FunFam" id="3.30.930.10:FF:000004">
    <property type="entry name" value="Alanine--tRNA ligase"/>
    <property type="match status" value="1"/>
</dbReference>
<dbReference type="FunFam" id="3.30.980.10:FF:000004">
    <property type="entry name" value="Alanine--tRNA ligase, cytoplasmic"/>
    <property type="match status" value="1"/>
</dbReference>
<dbReference type="Gene3D" id="2.40.30.130">
    <property type="match status" value="1"/>
</dbReference>
<dbReference type="Gene3D" id="3.10.310.40">
    <property type="match status" value="1"/>
</dbReference>
<dbReference type="Gene3D" id="3.30.54.20">
    <property type="match status" value="1"/>
</dbReference>
<dbReference type="Gene3D" id="6.10.250.550">
    <property type="match status" value="1"/>
</dbReference>
<dbReference type="Gene3D" id="3.30.930.10">
    <property type="entry name" value="Bira Bifunctional Protein, Domain 2"/>
    <property type="match status" value="1"/>
</dbReference>
<dbReference type="Gene3D" id="3.30.980.10">
    <property type="entry name" value="Threonyl-trna Synthetase, Chain A, domain 2"/>
    <property type="match status" value="1"/>
</dbReference>
<dbReference type="HAMAP" id="MF_00036_B">
    <property type="entry name" value="Ala_tRNA_synth_B"/>
    <property type="match status" value="1"/>
</dbReference>
<dbReference type="InterPro" id="IPR045864">
    <property type="entry name" value="aa-tRNA-synth_II/BPL/LPL"/>
</dbReference>
<dbReference type="InterPro" id="IPR002318">
    <property type="entry name" value="Ala-tRNA-lgiase_IIc"/>
</dbReference>
<dbReference type="InterPro" id="IPR018162">
    <property type="entry name" value="Ala-tRNA-ligase_IIc_anticod-bd"/>
</dbReference>
<dbReference type="InterPro" id="IPR018165">
    <property type="entry name" value="Ala-tRNA-synth_IIc_core"/>
</dbReference>
<dbReference type="InterPro" id="IPR018164">
    <property type="entry name" value="Ala-tRNA-synth_IIc_N"/>
</dbReference>
<dbReference type="InterPro" id="IPR050058">
    <property type="entry name" value="Ala-tRNA_ligase"/>
</dbReference>
<dbReference type="InterPro" id="IPR023033">
    <property type="entry name" value="Ala_tRNA_ligase_euk/bac"/>
</dbReference>
<dbReference type="InterPro" id="IPR003156">
    <property type="entry name" value="DHHA1_dom"/>
</dbReference>
<dbReference type="InterPro" id="IPR018163">
    <property type="entry name" value="Thr/Ala-tRNA-synth_IIc_edit"/>
</dbReference>
<dbReference type="InterPro" id="IPR009000">
    <property type="entry name" value="Transl_B-barrel_sf"/>
</dbReference>
<dbReference type="InterPro" id="IPR012947">
    <property type="entry name" value="tRNA_SAD"/>
</dbReference>
<dbReference type="NCBIfam" id="TIGR00344">
    <property type="entry name" value="alaS"/>
    <property type="match status" value="1"/>
</dbReference>
<dbReference type="PANTHER" id="PTHR11777:SF9">
    <property type="entry name" value="ALANINE--TRNA LIGASE, CYTOPLASMIC"/>
    <property type="match status" value="1"/>
</dbReference>
<dbReference type="PANTHER" id="PTHR11777">
    <property type="entry name" value="ALANYL-TRNA SYNTHETASE"/>
    <property type="match status" value="1"/>
</dbReference>
<dbReference type="Pfam" id="PF02272">
    <property type="entry name" value="DHHA1"/>
    <property type="match status" value="1"/>
</dbReference>
<dbReference type="Pfam" id="PF01411">
    <property type="entry name" value="tRNA-synt_2c"/>
    <property type="match status" value="1"/>
</dbReference>
<dbReference type="Pfam" id="PF07973">
    <property type="entry name" value="tRNA_SAD"/>
    <property type="match status" value="1"/>
</dbReference>
<dbReference type="PRINTS" id="PR00980">
    <property type="entry name" value="TRNASYNTHALA"/>
</dbReference>
<dbReference type="SMART" id="SM00863">
    <property type="entry name" value="tRNA_SAD"/>
    <property type="match status" value="1"/>
</dbReference>
<dbReference type="SUPFAM" id="SSF55681">
    <property type="entry name" value="Class II aaRS and biotin synthetases"/>
    <property type="match status" value="1"/>
</dbReference>
<dbReference type="SUPFAM" id="SSF101353">
    <property type="entry name" value="Putative anticodon-binding domain of alanyl-tRNA synthetase (AlaRS)"/>
    <property type="match status" value="1"/>
</dbReference>
<dbReference type="SUPFAM" id="SSF55186">
    <property type="entry name" value="ThrRS/AlaRS common domain"/>
    <property type="match status" value="1"/>
</dbReference>
<dbReference type="SUPFAM" id="SSF50447">
    <property type="entry name" value="Translation proteins"/>
    <property type="match status" value="1"/>
</dbReference>
<dbReference type="PROSITE" id="PS50860">
    <property type="entry name" value="AA_TRNA_LIGASE_II_ALA"/>
    <property type="match status" value="1"/>
</dbReference>
<keyword id="KW-0030">Aminoacyl-tRNA synthetase</keyword>
<keyword id="KW-0067">ATP-binding</keyword>
<keyword id="KW-0963">Cytoplasm</keyword>
<keyword id="KW-0436">Ligase</keyword>
<keyword id="KW-0479">Metal-binding</keyword>
<keyword id="KW-0547">Nucleotide-binding</keyword>
<keyword id="KW-0648">Protein biosynthesis</keyword>
<keyword id="KW-0694">RNA-binding</keyword>
<keyword id="KW-0820">tRNA-binding</keyword>
<keyword id="KW-0862">Zinc</keyword>